<feature type="chain" id="PRO_0000183973" description="Synaptotagmin-12">
    <location>
        <begin position="1"/>
        <end position="421"/>
    </location>
</feature>
<feature type="topological domain" description="Vesicular" evidence="3">
    <location>
        <begin position="1"/>
        <end position="18"/>
    </location>
</feature>
<feature type="transmembrane region" description="Helical" evidence="3">
    <location>
        <begin position="19"/>
        <end position="39"/>
    </location>
</feature>
<feature type="topological domain" description="Cytoplasmic" evidence="3">
    <location>
        <begin position="40"/>
        <end position="421"/>
    </location>
</feature>
<feature type="domain" description="C2 1" evidence="4">
    <location>
        <begin position="152"/>
        <end position="272"/>
    </location>
</feature>
<feature type="domain" description="C2 2" evidence="4">
    <location>
        <begin position="283"/>
        <end position="416"/>
    </location>
</feature>
<feature type="modified residue" description="Phosphoserine; by PKA" evidence="6">
    <location>
        <position position="97"/>
    </location>
</feature>
<feature type="modified residue" description="Phosphoserine" evidence="1">
    <location>
        <position position="99"/>
    </location>
</feature>
<feature type="modified residue" description="Phosphoserine" evidence="10">
    <location>
        <position position="214"/>
    </location>
</feature>
<feature type="mutagenesis site" description="Loss of phosphorylation by PKA. Reduces long-term potentiation in mossy-fiber synapses in the hippocampus but has no effect on short-term potentiation. Inhibits the effect of forskolin on synaptic transmission and inhibitory post-synaptic currents. No effect on excitatory and inhibitory synaptic transmission in the hippocampus. No effect on brain structure." evidence="6">
    <original>S</original>
    <variation>A</variation>
    <location>
        <position position="97"/>
    </location>
</feature>
<organism>
    <name type="scientific">Mus musculus</name>
    <name type="common">Mouse</name>
    <dbReference type="NCBI Taxonomy" id="10090"/>
    <lineage>
        <taxon>Eukaryota</taxon>
        <taxon>Metazoa</taxon>
        <taxon>Chordata</taxon>
        <taxon>Craniata</taxon>
        <taxon>Vertebrata</taxon>
        <taxon>Euteleostomi</taxon>
        <taxon>Mammalia</taxon>
        <taxon>Eutheria</taxon>
        <taxon>Euarchontoglires</taxon>
        <taxon>Glires</taxon>
        <taxon>Rodentia</taxon>
        <taxon>Myomorpha</taxon>
        <taxon>Muroidea</taxon>
        <taxon>Muridae</taxon>
        <taxon>Murinae</taxon>
        <taxon>Mus</taxon>
        <taxon>Mus</taxon>
    </lineage>
</organism>
<sequence length="421" mass="46680">MAVDVTEYHLSVIKSPPGWEVGVYAAGALALLGIAAVSLWKLWTSGSFPSPSPFPNYDYRYLQQKYGEAYVEAKLKRVPPWNDQRTTTRGPPSRKGSLSIEDTFESISELGPLELMGRELDLAPYGTLRKSQSADSLNSISSVSNTFGQDFTLGQVEVSMDYDGASHTLHVAVLQGKDLLEREEATFESCFMRVSLLPDEQIVGISRIQRNAYSIFFDEKFSVPLDPTALEEKSLRFSVFGIDEDERNVSTGVVELKLSVLDLPLQPFSGWLYLQDQNKAADAVGEILLSLSYLPTAERLTVVVVKAKNLIWTNEKSTADPFVKVYLLQDGRKMSKKKTAVKRDDPNPVFNEAMIFSVPAIVLQDLSLRVTVAESSSDGRGDNVGHVIIGPGVSGMGTTHWNQMLATLRRPVSMWHPVRRN</sequence>
<keyword id="KW-0968">Cytoplasmic vesicle</keyword>
<keyword id="KW-0472">Membrane</keyword>
<keyword id="KW-0597">Phosphoprotein</keyword>
<keyword id="KW-1185">Reference proteome</keyword>
<keyword id="KW-0677">Repeat</keyword>
<keyword id="KW-0770">Synapse</keyword>
<keyword id="KW-0812">Transmembrane</keyword>
<keyword id="KW-1133">Transmembrane helix</keyword>
<dbReference type="EMBL" id="AB062804">
    <property type="protein sequence ID" value="BAB69674.1"/>
    <property type="molecule type" value="mRNA"/>
</dbReference>
<dbReference type="EMBL" id="AK046627">
    <property type="protein sequence ID" value="BAC32812.1"/>
    <property type="molecule type" value="mRNA"/>
</dbReference>
<dbReference type="EMBL" id="AK083139">
    <property type="protein sequence ID" value="BAC38779.1"/>
    <property type="molecule type" value="mRNA"/>
</dbReference>
<dbReference type="CCDS" id="CCDS29428.1"/>
<dbReference type="RefSeq" id="NP_598925.1">
    <property type="nucleotide sequence ID" value="NM_134164.5"/>
</dbReference>
<dbReference type="SMR" id="Q920N7"/>
<dbReference type="BioGRID" id="228489">
    <property type="interactions" value="3"/>
</dbReference>
<dbReference type="FunCoup" id="Q920N7">
    <property type="interactions" value="123"/>
</dbReference>
<dbReference type="STRING" id="10090.ENSMUSP00000055237"/>
<dbReference type="GlyGen" id="Q920N7">
    <property type="glycosylation" value="1 site, 1 N-linked glycan (1 site)"/>
</dbReference>
<dbReference type="iPTMnet" id="Q920N7"/>
<dbReference type="PhosphoSitePlus" id="Q920N7"/>
<dbReference type="PaxDb" id="10090-ENSMUSP00000055237"/>
<dbReference type="ProteomicsDB" id="254616"/>
<dbReference type="ABCD" id="Q920N7">
    <property type="antibodies" value="1 sequenced antibody"/>
</dbReference>
<dbReference type="Antibodypedia" id="2614">
    <property type="antibodies" value="180 antibodies from 30 providers"/>
</dbReference>
<dbReference type="DNASU" id="171180"/>
<dbReference type="Ensembl" id="ENSMUST00000059295.10">
    <property type="protein sequence ID" value="ENSMUSP00000055237.4"/>
    <property type="gene ID" value="ENSMUSG00000049303.11"/>
</dbReference>
<dbReference type="GeneID" id="171180"/>
<dbReference type="KEGG" id="mmu:171180"/>
<dbReference type="UCSC" id="uc008gad.1">
    <property type="organism name" value="mouse"/>
</dbReference>
<dbReference type="AGR" id="MGI:2159601"/>
<dbReference type="CTD" id="91683"/>
<dbReference type="MGI" id="MGI:2159601">
    <property type="gene designation" value="Syt12"/>
</dbReference>
<dbReference type="VEuPathDB" id="HostDB:ENSMUSG00000049303"/>
<dbReference type="eggNOG" id="KOG1028">
    <property type="taxonomic scope" value="Eukaryota"/>
</dbReference>
<dbReference type="GeneTree" id="ENSGT00940000158627"/>
<dbReference type="HOGENOM" id="CLU_053862_0_0_1"/>
<dbReference type="InParanoid" id="Q920N7"/>
<dbReference type="OMA" id="LQPFGGW"/>
<dbReference type="OrthoDB" id="67700at2759"/>
<dbReference type="PhylomeDB" id="Q920N7"/>
<dbReference type="TreeFam" id="TF315600"/>
<dbReference type="BioGRID-ORCS" id="171180">
    <property type="hits" value="4 hits in 79 CRISPR screens"/>
</dbReference>
<dbReference type="ChiTaRS" id="Syt12">
    <property type="organism name" value="mouse"/>
</dbReference>
<dbReference type="PRO" id="PR:Q920N7"/>
<dbReference type="Proteomes" id="UP000000589">
    <property type="component" value="Chromosome 19"/>
</dbReference>
<dbReference type="RNAct" id="Q920N7">
    <property type="molecule type" value="protein"/>
</dbReference>
<dbReference type="Bgee" id="ENSMUSG00000049303">
    <property type="expression patterns" value="Expressed in lumbar subsegment of spinal cord and 75 other cell types or tissues"/>
</dbReference>
<dbReference type="ExpressionAtlas" id="Q920N7">
    <property type="expression patterns" value="baseline and differential"/>
</dbReference>
<dbReference type="GO" id="GO:0098686">
    <property type="term" value="C:hippocampal mossy fiber to CA3 synapse"/>
    <property type="evidence" value="ECO:0000314"/>
    <property type="project" value="SynGO"/>
</dbReference>
<dbReference type="GO" id="GO:0030672">
    <property type="term" value="C:synaptic vesicle membrane"/>
    <property type="evidence" value="ECO:0000314"/>
    <property type="project" value="SynGO"/>
</dbReference>
<dbReference type="GO" id="GO:0060291">
    <property type="term" value="P:long-term synaptic potentiation"/>
    <property type="evidence" value="ECO:0000315"/>
    <property type="project" value="UniProtKB"/>
</dbReference>
<dbReference type="GO" id="GO:0099171">
    <property type="term" value="P:presynaptic modulation of chemical synaptic transmission"/>
    <property type="evidence" value="ECO:0000314"/>
    <property type="project" value="SynGO"/>
</dbReference>
<dbReference type="GO" id="GO:0048792">
    <property type="term" value="P:spontaneous exocytosis of neurotransmitter"/>
    <property type="evidence" value="ECO:0007669"/>
    <property type="project" value="Ensembl"/>
</dbReference>
<dbReference type="CDD" id="cd08406">
    <property type="entry name" value="C2B_Synaptotagmin-12"/>
    <property type="match status" value="1"/>
</dbReference>
<dbReference type="FunFam" id="2.60.40.150:FF:000080">
    <property type="entry name" value="Putative synaptotagmin-12"/>
    <property type="match status" value="1"/>
</dbReference>
<dbReference type="FunFam" id="2.60.40.150:FF:000129">
    <property type="entry name" value="Synaptotagmin 12"/>
    <property type="match status" value="1"/>
</dbReference>
<dbReference type="Gene3D" id="2.60.40.150">
    <property type="entry name" value="C2 domain"/>
    <property type="match status" value="2"/>
</dbReference>
<dbReference type="InterPro" id="IPR000008">
    <property type="entry name" value="C2_dom"/>
</dbReference>
<dbReference type="InterPro" id="IPR035892">
    <property type="entry name" value="C2_domain_sf"/>
</dbReference>
<dbReference type="InterPro" id="IPR001565">
    <property type="entry name" value="Synaptotagmin"/>
</dbReference>
<dbReference type="InterPro" id="IPR030537">
    <property type="entry name" value="Syt12_C2B"/>
</dbReference>
<dbReference type="PANTHER" id="PTHR10024">
    <property type="entry name" value="SYNAPTOTAGMIN"/>
    <property type="match status" value="1"/>
</dbReference>
<dbReference type="PANTHER" id="PTHR10024:SF252">
    <property type="entry name" value="SYNAPTOTAGMIN-12"/>
    <property type="match status" value="1"/>
</dbReference>
<dbReference type="Pfam" id="PF00168">
    <property type="entry name" value="C2"/>
    <property type="match status" value="2"/>
</dbReference>
<dbReference type="PRINTS" id="PR00399">
    <property type="entry name" value="SYNAPTOTAGMN"/>
</dbReference>
<dbReference type="SMART" id="SM00239">
    <property type="entry name" value="C2"/>
    <property type="match status" value="2"/>
</dbReference>
<dbReference type="SUPFAM" id="SSF49562">
    <property type="entry name" value="C2 domain (Calcium/lipid-binding domain, CaLB)"/>
    <property type="match status" value="2"/>
</dbReference>
<dbReference type="PROSITE" id="PS50004">
    <property type="entry name" value="C2"/>
    <property type="match status" value="2"/>
</dbReference>
<evidence type="ECO:0000250" key="1">
    <source>
        <dbReference type="UniProtKB" id="P97610"/>
    </source>
</evidence>
<evidence type="ECO:0000250" key="2">
    <source>
        <dbReference type="UniProtKB" id="Q9R0N7"/>
    </source>
</evidence>
<evidence type="ECO:0000255" key="3"/>
<evidence type="ECO:0000255" key="4">
    <source>
        <dbReference type="PROSITE-ProRule" id="PRU00041"/>
    </source>
</evidence>
<evidence type="ECO:0000269" key="5">
    <source>
    </source>
</evidence>
<evidence type="ECO:0000269" key="6">
    <source>
    </source>
</evidence>
<evidence type="ECO:0000303" key="7">
    <source>
    </source>
</evidence>
<evidence type="ECO:0000303" key="8">
    <source>
    </source>
</evidence>
<evidence type="ECO:0000305" key="9"/>
<evidence type="ECO:0007744" key="10">
    <source>
    </source>
</evidence>
<gene>
    <name evidence="8" type="primary">Syt12</name>
</gene>
<proteinExistence type="evidence at protein level"/>
<name>SYT12_MOUSE</name>
<protein>
    <recommendedName>
        <fullName evidence="8">Synaptotagmin-12</fullName>
    </recommendedName>
    <alternativeName>
        <fullName evidence="7">Synaptotagmin XII</fullName>
        <shortName evidence="7">SytXII</shortName>
    </alternativeName>
</protein>
<accession>Q920N7</accession>
<comment type="function">
    <text evidence="1 6">Synaptic vesicle phosphoprotein that enhances spontaneous neurotransmitter release but does not effect induced neurotransmitter release (By similarity). Unlike other synaptotagmins, it does not bind Ca(2+) or phospholipids (By similarity). Essential for mossy-fiber long-term potentiation in the hippocampus (PubMed:23739973).</text>
</comment>
<comment type="subunit">
    <text evidence="1 2">Homodimer (By similarity). Can also form heterodimers (By similarity). Interacts with SYT1 (By similarity).</text>
</comment>
<comment type="subcellular location">
    <subcellularLocation>
        <location evidence="5">Cytoplasmic vesicle</location>
        <location evidence="5">Secretory vesicle</location>
        <location evidence="5">Synaptic vesicle membrane</location>
        <topology evidence="3">Single-pass membrane protein</topology>
    </subcellularLocation>
</comment>
<comment type="tissue specificity">
    <text evidence="5 6">Expressed in the brain, specifically by neurons in the hippocampus, and in the adrenal medulla (at protein level).</text>
</comment>
<comment type="developmental stage">
    <text evidence="5">Detected at low levels in the brain at postnatal day 5 (at protein level) (PubMed:17190793). Expression in the brain is increased by postnatal days 9 and 10, and continues to increase at postnatal days 15 and 20 (at protein level) (PubMed:17190793).</text>
</comment>
<comment type="PTM">
    <text evidence="6">Phosphorylation of Ser-97 is required for mossy-fiber long-term potentiation.</text>
</comment>
<comment type="disruption phenotype">
    <text evidence="6">No measurable change in basal synaptic strength or short-term neuronal plasticity (PubMed:23739973). Neurons from the CA3 hippocampal region exhibit an impairment of cAMP-dependent long-term potentiation in mossy-fiber synapses (PubMed:23739973).</text>
</comment>
<comment type="similarity">
    <text evidence="9">Belongs to the synaptotagmin family.</text>
</comment>
<comment type="caution">
    <text evidence="1">Unlike classical synaptotagmins, lacks Ca(2+)-binding sequences and does not bind phospholipids.</text>
</comment>
<reference key="1">
    <citation type="journal article" date="2001" name="J. Biol. Chem.">
        <title>Mechanism of the SDS-resistant synaptotagmin clustering mediated by the cysteine cluster at the interface between the transmembrane and spacer domains.</title>
        <authorList>
            <person name="Fukuda M."/>
            <person name="Kanno E."/>
            <person name="Ogata Y."/>
            <person name="Mikoshiba K."/>
        </authorList>
    </citation>
    <scope>NUCLEOTIDE SEQUENCE [MRNA]</scope>
    <source>
        <tissue>Brain</tissue>
    </source>
</reference>
<reference key="2">
    <citation type="journal article" date="2005" name="Science">
        <title>The transcriptional landscape of the mammalian genome.</title>
        <authorList>
            <person name="Carninci P."/>
            <person name="Kasukawa T."/>
            <person name="Katayama S."/>
            <person name="Gough J."/>
            <person name="Frith M.C."/>
            <person name="Maeda N."/>
            <person name="Oyama R."/>
            <person name="Ravasi T."/>
            <person name="Lenhard B."/>
            <person name="Wells C."/>
            <person name="Kodzius R."/>
            <person name="Shimokawa K."/>
            <person name="Bajic V.B."/>
            <person name="Brenner S.E."/>
            <person name="Batalov S."/>
            <person name="Forrest A.R."/>
            <person name="Zavolan M."/>
            <person name="Davis M.J."/>
            <person name="Wilming L.G."/>
            <person name="Aidinis V."/>
            <person name="Allen J.E."/>
            <person name="Ambesi-Impiombato A."/>
            <person name="Apweiler R."/>
            <person name="Aturaliya R.N."/>
            <person name="Bailey T.L."/>
            <person name="Bansal M."/>
            <person name="Baxter L."/>
            <person name="Beisel K.W."/>
            <person name="Bersano T."/>
            <person name="Bono H."/>
            <person name="Chalk A.M."/>
            <person name="Chiu K.P."/>
            <person name="Choudhary V."/>
            <person name="Christoffels A."/>
            <person name="Clutterbuck D.R."/>
            <person name="Crowe M.L."/>
            <person name="Dalla E."/>
            <person name="Dalrymple B.P."/>
            <person name="de Bono B."/>
            <person name="Della Gatta G."/>
            <person name="di Bernardo D."/>
            <person name="Down T."/>
            <person name="Engstrom P."/>
            <person name="Fagiolini M."/>
            <person name="Faulkner G."/>
            <person name="Fletcher C.F."/>
            <person name="Fukushima T."/>
            <person name="Furuno M."/>
            <person name="Futaki S."/>
            <person name="Gariboldi M."/>
            <person name="Georgii-Hemming P."/>
            <person name="Gingeras T.R."/>
            <person name="Gojobori T."/>
            <person name="Green R.E."/>
            <person name="Gustincich S."/>
            <person name="Harbers M."/>
            <person name="Hayashi Y."/>
            <person name="Hensch T.K."/>
            <person name="Hirokawa N."/>
            <person name="Hill D."/>
            <person name="Huminiecki L."/>
            <person name="Iacono M."/>
            <person name="Ikeo K."/>
            <person name="Iwama A."/>
            <person name="Ishikawa T."/>
            <person name="Jakt M."/>
            <person name="Kanapin A."/>
            <person name="Katoh M."/>
            <person name="Kawasawa Y."/>
            <person name="Kelso J."/>
            <person name="Kitamura H."/>
            <person name="Kitano H."/>
            <person name="Kollias G."/>
            <person name="Krishnan S.P."/>
            <person name="Kruger A."/>
            <person name="Kummerfeld S.K."/>
            <person name="Kurochkin I.V."/>
            <person name="Lareau L.F."/>
            <person name="Lazarevic D."/>
            <person name="Lipovich L."/>
            <person name="Liu J."/>
            <person name="Liuni S."/>
            <person name="McWilliam S."/>
            <person name="Madan Babu M."/>
            <person name="Madera M."/>
            <person name="Marchionni L."/>
            <person name="Matsuda H."/>
            <person name="Matsuzawa S."/>
            <person name="Miki H."/>
            <person name="Mignone F."/>
            <person name="Miyake S."/>
            <person name="Morris K."/>
            <person name="Mottagui-Tabar S."/>
            <person name="Mulder N."/>
            <person name="Nakano N."/>
            <person name="Nakauchi H."/>
            <person name="Ng P."/>
            <person name="Nilsson R."/>
            <person name="Nishiguchi S."/>
            <person name="Nishikawa S."/>
            <person name="Nori F."/>
            <person name="Ohara O."/>
            <person name="Okazaki Y."/>
            <person name="Orlando V."/>
            <person name="Pang K.C."/>
            <person name="Pavan W.J."/>
            <person name="Pavesi G."/>
            <person name="Pesole G."/>
            <person name="Petrovsky N."/>
            <person name="Piazza S."/>
            <person name="Reed J."/>
            <person name="Reid J.F."/>
            <person name="Ring B.Z."/>
            <person name="Ringwald M."/>
            <person name="Rost B."/>
            <person name="Ruan Y."/>
            <person name="Salzberg S.L."/>
            <person name="Sandelin A."/>
            <person name="Schneider C."/>
            <person name="Schoenbach C."/>
            <person name="Sekiguchi K."/>
            <person name="Semple C.A."/>
            <person name="Seno S."/>
            <person name="Sessa L."/>
            <person name="Sheng Y."/>
            <person name="Shibata Y."/>
            <person name="Shimada H."/>
            <person name="Shimada K."/>
            <person name="Silva D."/>
            <person name="Sinclair B."/>
            <person name="Sperling S."/>
            <person name="Stupka E."/>
            <person name="Sugiura K."/>
            <person name="Sultana R."/>
            <person name="Takenaka Y."/>
            <person name="Taki K."/>
            <person name="Tammoja K."/>
            <person name="Tan S.L."/>
            <person name="Tang S."/>
            <person name="Taylor M.S."/>
            <person name="Tegner J."/>
            <person name="Teichmann S.A."/>
            <person name="Ueda H.R."/>
            <person name="van Nimwegen E."/>
            <person name="Verardo R."/>
            <person name="Wei C.L."/>
            <person name="Yagi K."/>
            <person name="Yamanishi H."/>
            <person name="Zabarovsky E."/>
            <person name="Zhu S."/>
            <person name="Zimmer A."/>
            <person name="Hide W."/>
            <person name="Bult C."/>
            <person name="Grimmond S.M."/>
            <person name="Teasdale R.D."/>
            <person name="Liu E.T."/>
            <person name="Brusic V."/>
            <person name="Quackenbush J."/>
            <person name="Wahlestedt C."/>
            <person name="Mattick J.S."/>
            <person name="Hume D.A."/>
            <person name="Kai C."/>
            <person name="Sasaki D."/>
            <person name="Tomaru Y."/>
            <person name="Fukuda S."/>
            <person name="Kanamori-Katayama M."/>
            <person name="Suzuki M."/>
            <person name="Aoki J."/>
            <person name="Arakawa T."/>
            <person name="Iida J."/>
            <person name="Imamura K."/>
            <person name="Itoh M."/>
            <person name="Kato T."/>
            <person name="Kawaji H."/>
            <person name="Kawagashira N."/>
            <person name="Kawashima T."/>
            <person name="Kojima M."/>
            <person name="Kondo S."/>
            <person name="Konno H."/>
            <person name="Nakano K."/>
            <person name="Ninomiya N."/>
            <person name="Nishio T."/>
            <person name="Okada M."/>
            <person name="Plessy C."/>
            <person name="Shibata K."/>
            <person name="Shiraki T."/>
            <person name="Suzuki S."/>
            <person name="Tagami M."/>
            <person name="Waki K."/>
            <person name="Watahiki A."/>
            <person name="Okamura-Oho Y."/>
            <person name="Suzuki H."/>
            <person name="Kawai J."/>
            <person name="Hayashizaki Y."/>
        </authorList>
    </citation>
    <scope>NUCLEOTIDE SEQUENCE [LARGE SCALE MRNA]</scope>
    <source>
        <strain>C57BL/6J</strain>
        <tissue>Adipose tissue</tissue>
        <tissue>Hippocampus</tissue>
    </source>
</reference>
<reference key="3">
    <citation type="journal article" date="2007" name="J. Cell Biol.">
        <title>Synaptotagmin-12, a synaptic vesicle phosphoprotein that modulates spontaneous neurotransmitter release.</title>
        <authorList>
            <person name="Maximov A."/>
            <person name="Shin O.H."/>
            <person name="Liu X."/>
            <person name="Suedhof T.C."/>
        </authorList>
    </citation>
    <scope>SUBCELLULAR LOCATION</scope>
    <scope>TISSUE SPECIFICITY</scope>
    <scope>DEVELOPMENTAL STAGE</scope>
</reference>
<reference key="4">
    <citation type="journal article" date="2010" name="Cell">
        <title>A tissue-specific atlas of mouse protein phosphorylation and expression.</title>
        <authorList>
            <person name="Huttlin E.L."/>
            <person name="Jedrychowski M.P."/>
            <person name="Elias J.E."/>
            <person name="Goswami T."/>
            <person name="Rad R."/>
            <person name="Beausoleil S.A."/>
            <person name="Villen J."/>
            <person name="Haas W."/>
            <person name="Sowa M.E."/>
            <person name="Gygi S.P."/>
        </authorList>
    </citation>
    <scope>PHOSPHORYLATION [LARGE SCALE ANALYSIS] AT SER-214</scope>
    <scope>IDENTIFICATION BY MASS SPECTROMETRY [LARGE SCALE ANALYSIS]</scope>
    <source>
        <tissue>Brain</tissue>
    </source>
</reference>
<reference key="5">
    <citation type="journal article" date="2013" name="J. Neurosci.">
        <title>Synaptotagmin-12 phosphorylation by cAMP-dependent protein kinase is essential for hippocampal mossy fiber LTP.</title>
        <authorList>
            <person name="Kaeser-Woo Y.J."/>
            <person name="Younts T.J."/>
            <person name="Yang X."/>
            <person name="Zhou P."/>
            <person name="Wu D."/>
            <person name="Castillo P.E."/>
            <person name="Suedhof T.C."/>
        </authorList>
    </citation>
    <scope>FUNCTION</scope>
    <scope>TISSUE SPECIFICITY</scope>
    <scope>DISRUPTION PHENOTYPE</scope>
    <scope>PHOSPHORYLATION AT SER-97</scope>
    <scope>MUTAGENESIS OF SER-97</scope>
</reference>